<protein>
    <recommendedName>
        <fullName evidence="1">Uridylate kinase</fullName>
        <shortName evidence="1">UK</shortName>
        <ecNumber evidence="1">2.7.4.22</ecNumber>
    </recommendedName>
    <alternativeName>
        <fullName evidence="1">Uridine monophosphate kinase</fullName>
        <shortName evidence="1">UMP kinase</shortName>
        <shortName evidence="1">UMPK</shortName>
    </alternativeName>
</protein>
<comment type="function">
    <text evidence="1">Catalyzes the reversible phosphorylation of UMP to UDP.</text>
</comment>
<comment type="catalytic activity">
    <reaction evidence="1">
        <text>UMP + ATP = UDP + ADP</text>
        <dbReference type="Rhea" id="RHEA:24400"/>
        <dbReference type="ChEBI" id="CHEBI:30616"/>
        <dbReference type="ChEBI" id="CHEBI:57865"/>
        <dbReference type="ChEBI" id="CHEBI:58223"/>
        <dbReference type="ChEBI" id="CHEBI:456216"/>
        <dbReference type="EC" id="2.7.4.22"/>
    </reaction>
</comment>
<comment type="activity regulation">
    <text evidence="1">Inhibited by UTP.</text>
</comment>
<comment type="pathway">
    <text evidence="1">Pyrimidine metabolism; CTP biosynthesis via de novo pathway; UDP from UMP (UMPK route): step 1/1.</text>
</comment>
<comment type="subunit">
    <text evidence="1">Homohexamer.</text>
</comment>
<comment type="subcellular location">
    <subcellularLocation>
        <location evidence="1">Cytoplasm</location>
    </subcellularLocation>
</comment>
<comment type="similarity">
    <text evidence="1">Belongs to the UMP kinase family.</text>
</comment>
<comment type="sequence caution" evidence="2">
    <conflict type="erroneous initiation">
        <sequence resource="EMBL-CDS" id="ABM50849"/>
    </conflict>
</comment>
<reference key="1">
    <citation type="journal article" date="2010" name="Genome Biol. Evol.">
        <title>Continuing evolution of Burkholderia mallei through genome reduction and large-scale rearrangements.</title>
        <authorList>
            <person name="Losada L."/>
            <person name="Ronning C.M."/>
            <person name="DeShazer D."/>
            <person name="Woods D."/>
            <person name="Fedorova N."/>
            <person name="Kim H.S."/>
            <person name="Shabalina S.A."/>
            <person name="Pearson T.R."/>
            <person name="Brinkac L."/>
            <person name="Tan P."/>
            <person name="Nandi T."/>
            <person name="Crabtree J."/>
            <person name="Badger J."/>
            <person name="Beckstrom-Sternberg S."/>
            <person name="Saqib M."/>
            <person name="Schutzer S.E."/>
            <person name="Keim P."/>
            <person name="Nierman W.C."/>
        </authorList>
    </citation>
    <scope>NUCLEOTIDE SEQUENCE [LARGE SCALE GENOMIC DNA]</scope>
    <source>
        <strain>SAVP1</strain>
    </source>
</reference>
<feature type="chain" id="PRO_0000323811" description="Uridylate kinase">
    <location>
        <begin position="1"/>
        <end position="237"/>
    </location>
</feature>
<feature type="binding site" evidence="1">
    <location>
        <begin position="11"/>
        <end position="14"/>
    </location>
    <ligand>
        <name>ATP</name>
        <dbReference type="ChEBI" id="CHEBI:30616"/>
    </ligand>
</feature>
<feature type="binding site" evidence="1">
    <location>
        <position position="53"/>
    </location>
    <ligand>
        <name>UMP</name>
        <dbReference type="ChEBI" id="CHEBI:57865"/>
    </ligand>
</feature>
<feature type="binding site" evidence="1">
    <location>
        <position position="54"/>
    </location>
    <ligand>
        <name>ATP</name>
        <dbReference type="ChEBI" id="CHEBI:30616"/>
    </ligand>
</feature>
<feature type="binding site" evidence="1">
    <location>
        <position position="58"/>
    </location>
    <ligand>
        <name>ATP</name>
        <dbReference type="ChEBI" id="CHEBI:30616"/>
    </ligand>
</feature>
<feature type="binding site" evidence="1">
    <location>
        <position position="73"/>
    </location>
    <ligand>
        <name>UMP</name>
        <dbReference type="ChEBI" id="CHEBI:57865"/>
    </ligand>
</feature>
<feature type="binding site" evidence="1">
    <location>
        <begin position="134"/>
        <end position="141"/>
    </location>
    <ligand>
        <name>UMP</name>
        <dbReference type="ChEBI" id="CHEBI:57865"/>
    </ligand>
</feature>
<feature type="binding site" evidence="1">
    <location>
        <position position="161"/>
    </location>
    <ligand>
        <name>ATP</name>
        <dbReference type="ChEBI" id="CHEBI:30616"/>
    </ligand>
</feature>
<feature type="binding site" evidence="1">
    <location>
        <position position="167"/>
    </location>
    <ligand>
        <name>ATP</name>
        <dbReference type="ChEBI" id="CHEBI:30616"/>
    </ligand>
</feature>
<feature type="binding site" evidence="1">
    <location>
        <position position="170"/>
    </location>
    <ligand>
        <name>ATP</name>
        <dbReference type="ChEBI" id="CHEBI:30616"/>
    </ligand>
</feature>
<evidence type="ECO:0000255" key="1">
    <source>
        <dbReference type="HAMAP-Rule" id="MF_01220"/>
    </source>
</evidence>
<evidence type="ECO:0000305" key="2"/>
<dbReference type="EC" id="2.7.4.22" evidence="1"/>
<dbReference type="EMBL" id="CP000526">
    <property type="protein sequence ID" value="ABM50849.1"/>
    <property type="status" value="ALT_INIT"/>
    <property type="molecule type" value="Genomic_DNA"/>
</dbReference>
<dbReference type="RefSeq" id="WP_004193606.1">
    <property type="nucleotide sequence ID" value="NC_008785.1"/>
</dbReference>
<dbReference type="SMR" id="A1V567"/>
<dbReference type="GeneID" id="93060698"/>
<dbReference type="KEGG" id="bmv:BMASAVP1_A2054"/>
<dbReference type="HOGENOM" id="CLU_033861_0_0_4"/>
<dbReference type="UniPathway" id="UPA00159">
    <property type="reaction ID" value="UER00275"/>
</dbReference>
<dbReference type="GO" id="GO:0005829">
    <property type="term" value="C:cytosol"/>
    <property type="evidence" value="ECO:0007669"/>
    <property type="project" value="TreeGrafter"/>
</dbReference>
<dbReference type="GO" id="GO:0005524">
    <property type="term" value="F:ATP binding"/>
    <property type="evidence" value="ECO:0007669"/>
    <property type="project" value="UniProtKB-KW"/>
</dbReference>
<dbReference type="GO" id="GO:0033862">
    <property type="term" value="F:UMP kinase activity"/>
    <property type="evidence" value="ECO:0007669"/>
    <property type="project" value="UniProtKB-EC"/>
</dbReference>
<dbReference type="GO" id="GO:0044210">
    <property type="term" value="P:'de novo' CTP biosynthetic process"/>
    <property type="evidence" value="ECO:0007669"/>
    <property type="project" value="UniProtKB-UniRule"/>
</dbReference>
<dbReference type="GO" id="GO:0006225">
    <property type="term" value="P:UDP biosynthetic process"/>
    <property type="evidence" value="ECO:0007669"/>
    <property type="project" value="TreeGrafter"/>
</dbReference>
<dbReference type="CDD" id="cd04254">
    <property type="entry name" value="AAK_UMPK-PyrH-Ec"/>
    <property type="match status" value="1"/>
</dbReference>
<dbReference type="FunFam" id="3.40.1160.10:FF:000001">
    <property type="entry name" value="Uridylate kinase"/>
    <property type="match status" value="1"/>
</dbReference>
<dbReference type="Gene3D" id="3.40.1160.10">
    <property type="entry name" value="Acetylglutamate kinase-like"/>
    <property type="match status" value="1"/>
</dbReference>
<dbReference type="HAMAP" id="MF_01220_B">
    <property type="entry name" value="PyrH_B"/>
    <property type="match status" value="1"/>
</dbReference>
<dbReference type="InterPro" id="IPR036393">
    <property type="entry name" value="AceGlu_kinase-like_sf"/>
</dbReference>
<dbReference type="InterPro" id="IPR001048">
    <property type="entry name" value="Asp/Glu/Uridylate_kinase"/>
</dbReference>
<dbReference type="InterPro" id="IPR011817">
    <property type="entry name" value="Uridylate_kinase"/>
</dbReference>
<dbReference type="InterPro" id="IPR015963">
    <property type="entry name" value="Uridylate_kinase_bac"/>
</dbReference>
<dbReference type="NCBIfam" id="TIGR02075">
    <property type="entry name" value="pyrH_bact"/>
    <property type="match status" value="1"/>
</dbReference>
<dbReference type="PANTHER" id="PTHR42833">
    <property type="entry name" value="URIDYLATE KINASE"/>
    <property type="match status" value="1"/>
</dbReference>
<dbReference type="PANTHER" id="PTHR42833:SF4">
    <property type="entry name" value="URIDYLATE KINASE PUMPKIN, CHLOROPLASTIC"/>
    <property type="match status" value="1"/>
</dbReference>
<dbReference type="Pfam" id="PF00696">
    <property type="entry name" value="AA_kinase"/>
    <property type="match status" value="1"/>
</dbReference>
<dbReference type="PIRSF" id="PIRSF005650">
    <property type="entry name" value="Uridylate_kin"/>
    <property type="match status" value="1"/>
</dbReference>
<dbReference type="SUPFAM" id="SSF53633">
    <property type="entry name" value="Carbamate kinase-like"/>
    <property type="match status" value="1"/>
</dbReference>
<proteinExistence type="inferred from homology"/>
<name>PYRH_BURMS</name>
<sequence length="237" mass="25329">MPNAYKRVLLKLSGEALMGDDAFGINRATIERMVADIAEVVRLGTQLAVVIGGGNIFRGVAGGAAGMDRATADYMGMLATMMNALALQDAMRHAGIEARVQSALRMDQVVEPYIRPRAIRQLEEGKVVIFAAGTGNPFFTTDTAAALRGSEVGAEVVLKATKVDGVYSADPKKDPSATRYSSISFDEAIGRNLQVMDATAFALCRDQKLPIRVFSINKPGALKRIVQGEDEGTLVHV</sequence>
<keyword id="KW-0067">ATP-binding</keyword>
<keyword id="KW-0963">Cytoplasm</keyword>
<keyword id="KW-0418">Kinase</keyword>
<keyword id="KW-0547">Nucleotide-binding</keyword>
<keyword id="KW-0665">Pyrimidine biosynthesis</keyword>
<keyword id="KW-0808">Transferase</keyword>
<accession>A1V567</accession>
<gene>
    <name evidence="1" type="primary">pyrH</name>
    <name type="ordered locus">BMASAVP1_A2054</name>
</gene>
<organism>
    <name type="scientific">Burkholderia mallei (strain SAVP1)</name>
    <dbReference type="NCBI Taxonomy" id="320388"/>
    <lineage>
        <taxon>Bacteria</taxon>
        <taxon>Pseudomonadati</taxon>
        <taxon>Pseudomonadota</taxon>
        <taxon>Betaproteobacteria</taxon>
        <taxon>Burkholderiales</taxon>
        <taxon>Burkholderiaceae</taxon>
        <taxon>Burkholderia</taxon>
        <taxon>pseudomallei group</taxon>
    </lineage>
</organism>